<name>Y4SK_SINFN</name>
<proteinExistence type="inferred from homology"/>
<reference key="1">
    <citation type="journal article" date="1997" name="Nature">
        <title>Molecular basis of symbiosis between Rhizobium and legumes.</title>
        <authorList>
            <person name="Freiberg C.A."/>
            <person name="Fellay R."/>
            <person name="Bairoch A."/>
            <person name="Broughton W.J."/>
            <person name="Rosenthal A."/>
            <person name="Perret X."/>
        </authorList>
    </citation>
    <scope>NUCLEOTIDE SEQUENCE [LARGE SCALE GENOMIC DNA]</scope>
    <source>
        <strain>NBRC 101917 / NGR234</strain>
    </source>
</reference>
<reference key="2">
    <citation type="journal article" date="2009" name="Appl. Environ. Microbiol.">
        <title>Rhizobium sp. strain NGR234 possesses a remarkable number of secretion systems.</title>
        <authorList>
            <person name="Schmeisser C."/>
            <person name="Liesegang H."/>
            <person name="Krysciak D."/>
            <person name="Bakkou N."/>
            <person name="Le Quere A."/>
            <person name="Wollherr A."/>
            <person name="Heinemeyer I."/>
            <person name="Morgenstern B."/>
            <person name="Pommerening-Roeser A."/>
            <person name="Flores M."/>
            <person name="Palacios R."/>
            <person name="Brenner S."/>
            <person name="Gottschalk G."/>
            <person name="Schmitz R.A."/>
            <person name="Broughton W.J."/>
            <person name="Perret X."/>
            <person name="Strittmatter A.W."/>
            <person name="Streit W.R."/>
        </authorList>
    </citation>
    <scope>NUCLEOTIDE SEQUENCE [LARGE SCALE GENOMIC DNA]</scope>
    <source>
        <strain>NBRC 101917 / NGR234</strain>
    </source>
</reference>
<accession>P55654</accession>
<dbReference type="EMBL" id="U00090">
    <property type="protein sequence ID" value="AAB91850.1"/>
    <property type="molecule type" value="Genomic_DNA"/>
</dbReference>
<dbReference type="RefSeq" id="NP_444063.1">
    <property type="nucleotide sequence ID" value="NC_000914.2"/>
</dbReference>
<dbReference type="RefSeq" id="WP_010875198.1">
    <property type="nucleotide sequence ID" value="NC_000914.2"/>
</dbReference>
<dbReference type="SMR" id="P55654"/>
<dbReference type="KEGG" id="rhi:NGR_a01620"/>
<dbReference type="PATRIC" id="fig|394.7.peg.151"/>
<dbReference type="eggNOG" id="COG0251">
    <property type="taxonomic scope" value="Bacteria"/>
</dbReference>
<dbReference type="HOGENOM" id="CLU_100715_7_1_5"/>
<dbReference type="OrthoDB" id="583118at2"/>
<dbReference type="Proteomes" id="UP000001054">
    <property type="component" value="Plasmid pNGR234a"/>
</dbReference>
<dbReference type="GO" id="GO:0005829">
    <property type="term" value="C:cytosol"/>
    <property type="evidence" value="ECO:0007669"/>
    <property type="project" value="TreeGrafter"/>
</dbReference>
<dbReference type="GO" id="GO:0019239">
    <property type="term" value="F:deaminase activity"/>
    <property type="evidence" value="ECO:0007669"/>
    <property type="project" value="TreeGrafter"/>
</dbReference>
<dbReference type="CDD" id="cd00448">
    <property type="entry name" value="YjgF_YER057c_UK114_family"/>
    <property type="match status" value="1"/>
</dbReference>
<dbReference type="FunFam" id="3.30.1330.40:FF:000001">
    <property type="entry name" value="L-PSP family endoribonuclease"/>
    <property type="match status" value="1"/>
</dbReference>
<dbReference type="Gene3D" id="3.30.1330.40">
    <property type="entry name" value="RutC-like"/>
    <property type="match status" value="1"/>
</dbReference>
<dbReference type="InterPro" id="IPR006056">
    <property type="entry name" value="RidA"/>
</dbReference>
<dbReference type="InterPro" id="IPR019897">
    <property type="entry name" value="RidA_CS"/>
</dbReference>
<dbReference type="InterPro" id="IPR035959">
    <property type="entry name" value="RutC-like_sf"/>
</dbReference>
<dbReference type="InterPro" id="IPR006175">
    <property type="entry name" value="YjgF/YER057c/UK114"/>
</dbReference>
<dbReference type="NCBIfam" id="TIGR00004">
    <property type="entry name" value="Rid family detoxifying hydrolase"/>
    <property type="match status" value="1"/>
</dbReference>
<dbReference type="PANTHER" id="PTHR11803">
    <property type="entry name" value="2-IMINOBUTANOATE/2-IMINOPROPANOATE DEAMINASE RIDA"/>
    <property type="match status" value="1"/>
</dbReference>
<dbReference type="PANTHER" id="PTHR11803:SF39">
    <property type="entry name" value="2-IMINOBUTANOATE_2-IMINOPROPANOATE DEAMINASE"/>
    <property type="match status" value="1"/>
</dbReference>
<dbReference type="Pfam" id="PF01042">
    <property type="entry name" value="Ribonuc_L-PSP"/>
    <property type="match status" value="1"/>
</dbReference>
<dbReference type="SUPFAM" id="SSF55298">
    <property type="entry name" value="YjgF-like"/>
    <property type="match status" value="1"/>
</dbReference>
<dbReference type="PROSITE" id="PS01094">
    <property type="entry name" value="UPF0076"/>
    <property type="match status" value="1"/>
</dbReference>
<sequence>MIEPISTNDAPGAVGPYSQAIKVGDLLFVSGQLPIDPATGEFNSANAVEQAEQCLKNLQAIARAAGTDLSKTVKTTVLLTDLGDFADINRVYTGFFSTPYPARACYEVKALPKGAKVEIEAVISLT</sequence>
<evidence type="ECO:0000305" key="1"/>
<organism>
    <name type="scientific">Sinorhizobium fredii (strain NBRC 101917 / NGR234)</name>
    <dbReference type="NCBI Taxonomy" id="394"/>
    <lineage>
        <taxon>Bacteria</taxon>
        <taxon>Pseudomonadati</taxon>
        <taxon>Pseudomonadota</taxon>
        <taxon>Alphaproteobacteria</taxon>
        <taxon>Hyphomicrobiales</taxon>
        <taxon>Rhizobiaceae</taxon>
        <taxon>Sinorhizobium/Ensifer group</taxon>
        <taxon>Sinorhizobium</taxon>
    </lineage>
</organism>
<feature type="chain" id="PRO_0000170340" description="RutC family protein y4sK">
    <location>
        <begin position="1"/>
        <end position="126"/>
    </location>
</feature>
<keyword id="KW-0614">Plasmid</keyword>
<keyword id="KW-1185">Reference proteome</keyword>
<gene>
    <name type="ordered locus">NGR_a01620</name>
    <name type="ORF">y4sK</name>
</gene>
<protein>
    <recommendedName>
        <fullName>RutC family protein y4sK</fullName>
    </recommendedName>
</protein>
<comment type="similarity">
    <text evidence="1">Belongs to the RutC family.</text>
</comment>
<geneLocation type="plasmid">
    <name>sym pNGR234a</name>
</geneLocation>